<protein>
    <recommendedName>
        <fullName evidence="2">D-alanine--D-alanine ligase</fullName>
        <ecNumber evidence="2">6.3.2.4</ecNumber>
    </recommendedName>
    <alternativeName>
        <fullName evidence="2">D-Ala-D-Ala ligase</fullName>
    </alternativeName>
    <alternativeName>
        <fullName evidence="2">D-alanylalanine synthetase</fullName>
    </alternativeName>
</protein>
<dbReference type="EC" id="6.3.2.4" evidence="2"/>
<dbReference type="EMBL" id="CP000514">
    <property type="protein sequence ID" value="ABM19525.1"/>
    <property type="molecule type" value="Genomic_DNA"/>
</dbReference>
<dbReference type="RefSeq" id="WP_011785909.1">
    <property type="nucleotide sequence ID" value="NC_008740.1"/>
</dbReference>
<dbReference type="SMR" id="A1U3F6"/>
<dbReference type="STRING" id="351348.Maqu_2450"/>
<dbReference type="KEGG" id="maq:Maqu_2450"/>
<dbReference type="eggNOG" id="COG1181">
    <property type="taxonomic scope" value="Bacteria"/>
</dbReference>
<dbReference type="HOGENOM" id="CLU_039268_1_2_6"/>
<dbReference type="OrthoDB" id="9813261at2"/>
<dbReference type="UniPathway" id="UPA00219"/>
<dbReference type="Proteomes" id="UP000000998">
    <property type="component" value="Chromosome"/>
</dbReference>
<dbReference type="GO" id="GO:0005829">
    <property type="term" value="C:cytosol"/>
    <property type="evidence" value="ECO:0007669"/>
    <property type="project" value="TreeGrafter"/>
</dbReference>
<dbReference type="GO" id="GO:0005524">
    <property type="term" value="F:ATP binding"/>
    <property type="evidence" value="ECO:0007669"/>
    <property type="project" value="UniProtKB-KW"/>
</dbReference>
<dbReference type="GO" id="GO:0008716">
    <property type="term" value="F:D-alanine-D-alanine ligase activity"/>
    <property type="evidence" value="ECO:0007669"/>
    <property type="project" value="UniProtKB-UniRule"/>
</dbReference>
<dbReference type="GO" id="GO:0046872">
    <property type="term" value="F:metal ion binding"/>
    <property type="evidence" value="ECO:0007669"/>
    <property type="project" value="UniProtKB-KW"/>
</dbReference>
<dbReference type="GO" id="GO:0071555">
    <property type="term" value="P:cell wall organization"/>
    <property type="evidence" value="ECO:0007669"/>
    <property type="project" value="UniProtKB-KW"/>
</dbReference>
<dbReference type="GO" id="GO:0009252">
    <property type="term" value="P:peptidoglycan biosynthetic process"/>
    <property type="evidence" value="ECO:0007669"/>
    <property type="project" value="UniProtKB-UniRule"/>
</dbReference>
<dbReference type="GO" id="GO:0008360">
    <property type="term" value="P:regulation of cell shape"/>
    <property type="evidence" value="ECO:0007669"/>
    <property type="project" value="UniProtKB-KW"/>
</dbReference>
<dbReference type="FunFam" id="3.30.470.20:FF:000008">
    <property type="entry name" value="D-alanine--D-alanine ligase"/>
    <property type="match status" value="1"/>
</dbReference>
<dbReference type="Gene3D" id="3.40.50.20">
    <property type="match status" value="1"/>
</dbReference>
<dbReference type="Gene3D" id="3.30.1490.20">
    <property type="entry name" value="ATP-grasp fold, A domain"/>
    <property type="match status" value="1"/>
</dbReference>
<dbReference type="Gene3D" id="3.30.470.20">
    <property type="entry name" value="ATP-grasp fold, B domain"/>
    <property type="match status" value="1"/>
</dbReference>
<dbReference type="HAMAP" id="MF_00047">
    <property type="entry name" value="Dala_Dala_lig"/>
    <property type="match status" value="1"/>
</dbReference>
<dbReference type="InterPro" id="IPR011761">
    <property type="entry name" value="ATP-grasp"/>
</dbReference>
<dbReference type="InterPro" id="IPR013815">
    <property type="entry name" value="ATP_grasp_subdomain_1"/>
</dbReference>
<dbReference type="InterPro" id="IPR000291">
    <property type="entry name" value="D-Ala_lig_Van_CS"/>
</dbReference>
<dbReference type="InterPro" id="IPR005905">
    <property type="entry name" value="D_ala_D_ala"/>
</dbReference>
<dbReference type="InterPro" id="IPR011095">
    <property type="entry name" value="Dala_Dala_lig_C"/>
</dbReference>
<dbReference type="InterPro" id="IPR011127">
    <property type="entry name" value="Dala_Dala_lig_N"/>
</dbReference>
<dbReference type="InterPro" id="IPR016185">
    <property type="entry name" value="PreATP-grasp_dom_sf"/>
</dbReference>
<dbReference type="NCBIfam" id="TIGR01205">
    <property type="entry name" value="D_ala_D_alaTIGR"/>
    <property type="match status" value="1"/>
</dbReference>
<dbReference type="NCBIfam" id="NF002378">
    <property type="entry name" value="PRK01372.1"/>
    <property type="match status" value="1"/>
</dbReference>
<dbReference type="PANTHER" id="PTHR23132">
    <property type="entry name" value="D-ALANINE--D-ALANINE LIGASE"/>
    <property type="match status" value="1"/>
</dbReference>
<dbReference type="PANTHER" id="PTHR23132:SF23">
    <property type="entry name" value="D-ALANINE--D-ALANINE LIGASE B"/>
    <property type="match status" value="1"/>
</dbReference>
<dbReference type="Pfam" id="PF07478">
    <property type="entry name" value="Dala_Dala_lig_C"/>
    <property type="match status" value="1"/>
</dbReference>
<dbReference type="Pfam" id="PF01820">
    <property type="entry name" value="Dala_Dala_lig_N"/>
    <property type="match status" value="1"/>
</dbReference>
<dbReference type="PIRSF" id="PIRSF039102">
    <property type="entry name" value="Ddl/VanB"/>
    <property type="match status" value="1"/>
</dbReference>
<dbReference type="SUPFAM" id="SSF56059">
    <property type="entry name" value="Glutathione synthetase ATP-binding domain-like"/>
    <property type="match status" value="1"/>
</dbReference>
<dbReference type="SUPFAM" id="SSF52440">
    <property type="entry name" value="PreATP-grasp domain"/>
    <property type="match status" value="1"/>
</dbReference>
<dbReference type="PROSITE" id="PS50975">
    <property type="entry name" value="ATP_GRASP"/>
    <property type="match status" value="1"/>
</dbReference>
<dbReference type="PROSITE" id="PS00843">
    <property type="entry name" value="DALA_DALA_LIGASE_1"/>
    <property type="match status" value="1"/>
</dbReference>
<feature type="chain" id="PRO_0000341129" description="D-alanine--D-alanine ligase">
    <location>
        <begin position="1"/>
        <end position="325"/>
    </location>
</feature>
<feature type="domain" description="ATP-grasp" evidence="2">
    <location>
        <begin position="121"/>
        <end position="316"/>
    </location>
</feature>
<feature type="binding site" evidence="2">
    <location>
        <begin position="147"/>
        <end position="202"/>
    </location>
    <ligand>
        <name>ATP</name>
        <dbReference type="ChEBI" id="CHEBI:30616"/>
    </ligand>
</feature>
<feature type="binding site" evidence="2">
    <location>
        <position position="270"/>
    </location>
    <ligand>
        <name>Mg(2+)</name>
        <dbReference type="ChEBI" id="CHEBI:18420"/>
        <label>1</label>
    </ligand>
</feature>
<feature type="binding site" evidence="2">
    <location>
        <position position="283"/>
    </location>
    <ligand>
        <name>Mg(2+)</name>
        <dbReference type="ChEBI" id="CHEBI:18420"/>
        <label>1</label>
    </ligand>
</feature>
<feature type="binding site" evidence="2">
    <location>
        <position position="283"/>
    </location>
    <ligand>
        <name>Mg(2+)</name>
        <dbReference type="ChEBI" id="CHEBI:18420"/>
        <label>2</label>
    </ligand>
</feature>
<feature type="binding site" evidence="2">
    <location>
        <position position="285"/>
    </location>
    <ligand>
        <name>Mg(2+)</name>
        <dbReference type="ChEBI" id="CHEBI:18420"/>
        <label>2</label>
    </ligand>
</feature>
<sequence length="325" mass="34906">MSDLTHNDIQPYQAHPELVRALGRVAVFMGGDSAEREVSLKSGKAVLAALQSAGIDAVGRDIQGCLLRTVDEPDFDRVFIALHGRGGEDGTLQAILGQAGIPYTGSEVLASALAMDKLRTKYVFEGCGLPTPAFRAMTSVGEAEGIVAALGTPLSVKPAHEGSSIGIRKVNSAAELAEAYEAAARLDDLVLVEQWIEGPEFTVSLLQDKALPAIGLSTDHAFYDYDAKYLADDTRYRIPCGLAPDDELRLQHLALDAFRVLGCRTWGRVDIMQDRAGEFWLLEVNTVPGMTDHSLVPMAAKAAGISFEELVVRILRDTLAEGIDA</sequence>
<evidence type="ECO:0000250" key="1"/>
<evidence type="ECO:0000255" key="2">
    <source>
        <dbReference type="HAMAP-Rule" id="MF_00047"/>
    </source>
</evidence>
<proteinExistence type="inferred from homology"/>
<organism>
    <name type="scientific">Marinobacter nauticus (strain ATCC 700491 / DSM 11845 / VT8)</name>
    <name type="common">Marinobacter aquaeolei</name>
    <dbReference type="NCBI Taxonomy" id="351348"/>
    <lineage>
        <taxon>Bacteria</taxon>
        <taxon>Pseudomonadati</taxon>
        <taxon>Pseudomonadota</taxon>
        <taxon>Gammaproteobacteria</taxon>
        <taxon>Pseudomonadales</taxon>
        <taxon>Marinobacteraceae</taxon>
        <taxon>Marinobacter</taxon>
    </lineage>
</organism>
<reference key="1">
    <citation type="journal article" date="2011" name="Appl. Environ. Microbiol.">
        <title>Genomic potential of Marinobacter aquaeolei, a biogeochemical 'opportunitroph'.</title>
        <authorList>
            <person name="Singer E."/>
            <person name="Webb E.A."/>
            <person name="Nelson W.C."/>
            <person name="Heidelberg J.F."/>
            <person name="Ivanova N."/>
            <person name="Pati A."/>
            <person name="Edwards K.J."/>
        </authorList>
    </citation>
    <scope>NUCLEOTIDE SEQUENCE [LARGE SCALE GENOMIC DNA]</scope>
    <source>
        <strain>ATCC 700491 / DSM 11845 / VT8</strain>
    </source>
</reference>
<accession>A1U3F6</accession>
<name>DDL_MARN8</name>
<keyword id="KW-0067">ATP-binding</keyword>
<keyword id="KW-0133">Cell shape</keyword>
<keyword id="KW-0961">Cell wall biogenesis/degradation</keyword>
<keyword id="KW-0963">Cytoplasm</keyword>
<keyword id="KW-0436">Ligase</keyword>
<keyword id="KW-0460">Magnesium</keyword>
<keyword id="KW-0464">Manganese</keyword>
<keyword id="KW-0479">Metal-binding</keyword>
<keyword id="KW-0547">Nucleotide-binding</keyword>
<keyword id="KW-0573">Peptidoglycan synthesis</keyword>
<comment type="function">
    <text evidence="2">Cell wall formation.</text>
</comment>
<comment type="catalytic activity">
    <reaction evidence="2">
        <text>2 D-alanine + ATP = D-alanyl-D-alanine + ADP + phosphate + H(+)</text>
        <dbReference type="Rhea" id="RHEA:11224"/>
        <dbReference type="ChEBI" id="CHEBI:15378"/>
        <dbReference type="ChEBI" id="CHEBI:30616"/>
        <dbReference type="ChEBI" id="CHEBI:43474"/>
        <dbReference type="ChEBI" id="CHEBI:57416"/>
        <dbReference type="ChEBI" id="CHEBI:57822"/>
        <dbReference type="ChEBI" id="CHEBI:456216"/>
        <dbReference type="EC" id="6.3.2.4"/>
    </reaction>
</comment>
<comment type="cofactor">
    <cofactor evidence="1">
        <name>Mg(2+)</name>
        <dbReference type="ChEBI" id="CHEBI:18420"/>
    </cofactor>
    <cofactor evidence="1">
        <name>Mn(2+)</name>
        <dbReference type="ChEBI" id="CHEBI:29035"/>
    </cofactor>
    <text evidence="1">Binds 2 magnesium or manganese ions per subunit.</text>
</comment>
<comment type="pathway">
    <text evidence="2">Cell wall biogenesis; peptidoglycan biosynthesis.</text>
</comment>
<comment type="subcellular location">
    <subcellularLocation>
        <location evidence="2">Cytoplasm</location>
    </subcellularLocation>
</comment>
<comment type="similarity">
    <text evidence="2">Belongs to the D-alanine--D-alanine ligase family.</text>
</comment>
<gene>
    <name evidence="2" type="primary">ddl</name>
    <name type="ordered locus">Maqu_2450</name>
</gene>